<evidence type="ECO:0000255" key="1">
    <source>
        <dbReference type="HAMAP-Rule" id="MF_01309"/>
    </source>
</evidence>
<evidence type="ECO:0000256" key="2">
    <source>
        <dbReference type="SAM" id="MobiDB-lite"/>
    </source>
</evidence>
<evidence type="ECO:0000305" key="3"/>
<keyword id="KW-1185">Reference proteome</keyword>
<keyword id="KW-0687">Ribonucleoprotein</keyword>
<keyword id="KW-0689">Ribosomal protein</keyword>
<keyword id="KW-0694">RNA-binding</keyword>
<keyword id="KW-0699">rRNA-binding</keyword>
<proteinExistence type="inferred from homology"/>
<organism>
    <name type="scientific">Cupriavidus metallidurans (strain ATCC 43123 / DSM 2839 / NBRC 102507 / CH34)</name>
    <name type="common">Ralstonia metallidurans</name>
    <dbReference type="NCBI Taxonomy" id="266264"/>
    <lineage>
        <taxon>Bacteria</taxon>
        <taxon>Pseudomonadati</taxon>
        <taxon>Pseudomonadota</taxon>
        <taxon>Betaproteobacteria</taxon>
        <taxon>Burkholderiales</taxon>
        <taxon>Burkholderiaceae</taxon>
        <taxon>Cupriavidus</taxon>
    </lineage>
</organism>
<comment type="function">
    <text evidence="1">Binds the lower part of the 30S subunit head. Binds mRNA in the 70S ribosome, positioning it for translation.</text>
</comment>
<comment type="subunit">
    <text evidence="1">Part of the 30S ribosomal subunit. Forms a tight complex with proteins S10 and S14.</text>
</comment>
<comment type="similarity">
    <text evidence="1">Belongs to the universal ribosomal protein uS3 family.</text>
</comment>
<dbReference type="EMBL" id="CP000352">
    <property type="protein sequence ID" value="ABF10183.1"/>
    <property type="molecule type" value="Genomic_DNA"/>
</dbReference>
<dbReference type="RefSeq" id="WP_008642932.1">
    <property type="nucleotide sequence ID" value="NC_007973.1"/>
</dbReference>
<dbReference type="SMR" id="Q1LI43"/>
<dbReference type="STRING" id="266264.Rmet_3311"/>
<dbReference type="GeneID" id="60826606"/>
<dbReference type="KEGG" id="rme:Rmet_3311"/>
<dbReference type="eggNOG" id="COG0092">
    <property type="taxonomic scope" value="Bacteria"/>
</dbReference>
<dbReference type="HOGENOM" id="CLU_058591_0_2_4"/>
<dbReference type="Proteomes" id="UP000002429">
    <property type="component" value="Chromosome"/>
</dbReference>
<dbReference type="GO" id="GO:0022627">
    <property type="term" value="C:cytosolic small ribosomal subunit"/>
    <property type="evidence" value="ECO:0007669"/>
    <property type="project" value="TreeGrafter"/>
</dbReference>
<dbReference type="GO" id="GO:0003729">
    <property type="term" value="F:mRNA binding"/>
    <property type="evidence" value="ECO:0007669"/>
    <property type="project" value="UniProtKB-UniRule"/>
</dbReference>
<dbReference type="GO" id="GO:0019843">
    <property type="term" value="F:rRNA binding"/>
    <property type="evidence" value="ECO:0007669"/>
    <property type="project" value="UniProtKB-UniRule"/>
</dbReference>
<dbReference type="GO" id="GO:0003735">
    <property type="term" value="F:structural constituent of ribosome"/>
    <property type="evidence" value="ECO:0007669"/>
    <property type="project" value="InterPro"/>
</dbReference>
<dbReference type="GO" id="GO:0006412">
    <property type="term" value="P:translation"/>
    <property type="evidence" value="ECO:0007669"/>
    <property type="project" value="UniProtKB-UniRule"/>
</dbReference>
<dbReference type="CDD" id="cd02412">
    <property type="entry name" value="KH-II_30S_S3"/>
    <property type="match status" value="1"/>
</dbReference>
<dbReference type="FunFam" id="3.30.1140.32:FF:000006">
    <property type="entry name" value="30S ribosomal protein S3"/>
    <property type="match status" value="1"/>
</dbReference>
<dbReference type="FunFam" id="3.30.300.20:FF:000001">
    <property type="entry name" value="30S ribosomal protein S3"/>
    <property type="match status" value="1"/>
</dbReference>
<dbReference type="Gene3D" id="3.30.300.20">
    <property type="match status" value="1"/>
</dbReference>
<dbReference type="Gene3D" id="3.30.1140.32">
    <property type="entry name" value="Ribosomal protein S3, C-terminal domain"/>
    <property type="match status" value="1"/>
</dbReference>
<dbReference type="HAMAP" id="MF_01309_B">
    <property type="entry name" value="Ribosomal_uS3_B"/>
    <property type="match status" value="1"/>
</dbReference>
<dbReference type="InterPro" id="IPR004087">
    <property type="entry name" value="KH_dom"/>
</dbReference>
<dbReference type="InterPro" id="IPR015946">
    <property type="entry name" value="KH_dom-like_a/b"/>
</dbReference>
<dbReference type="InterPro" id="IPR004044">
    <property type="entry name" value="KH_dom_type_2"/>
</dbReference>
<dbReference type="InterPro" id="IPR009019">
    <property type="entry name" value="KH_sf_prok-type"/>
</dbReference>
<dbReference type="InterPro" id="IPR036419">
    <property type="entry name" value="Ribosomal_S3_C_sf"/>
</dbReference>
<dbReference type="InterPro" id="IPR005704">
    <property type="entry name" value="Ribosomal_uS3_bac-typ"/>
</dbReference>
<dbReference type="InterPro" id="IPR001351">
    <property type="entry name" value="Ribosomal_uS3_C"/>
</dbReference>
<dbReference type="InterPro" id="IPR018280">
    <property type="entry name" value="Ribosomal_uS3_CS"/>
</dbReference>
<dbReference type="NCBIfam" id="TIGR01009">
    <property type="entry name" value="rpsC_bact"/>
    <property type="match status" value="1"/>
</dbReference>
<dbReference type="PANTHER" id="PTHR11760">
    <property type="entry name" value="30S/40S RIBOSOMAL PROTEIN S3"/>
    <property type="match status" value="1"/>
</dbReference>
<dbReference type="PANTHER" id="PTHR11760:SF19">
    <property type="entry name" value="SMALL RIBOSOMAL SUBUNIT PROTEIN US3C"/>
    <property type="match status" value="1"/>
</dbReference>
<dbReference type="Pfam" id="PF07650">
    <property type="entry name" value="KH_2"/>
    <property type="match status" value="1"/>
</dbReference>
<dbReference type="Pfam" id="PF00189">
    <property type="entry name" value="Ribosomal_S3_C"/>
    <property type="match status" value="1"/>
</dbReference>
<dbReference type="SMART" id="SM00322">
    <property type="entry name" value="KH"/>
    <property type="match status" value="1"/>
</dbReference>
<dbReference type="SUPFAM" id="SSF54814">
    <property type="entry name" value="Prokaryotic type KH domain (KH-domain type II)"/>
    <property type="match status" value="1"/>
</dbReference>
<dbReference type="SUPFAM" id="SSF54821">
    <property type="entry name" value="Ribosomal protein S3 C-terminal domain"/>
    <property type="match status" value="1"/>
</dbReference>
<dbReference type="PROSITE" id="PS50823">
    <property type="entry name" value="KH_TYPE_2"/>
    <property type="match status" value="1"/>
</dbReference>
<dbReference type="PROSITE" id="PS00548">
    <property type="entry name" value="RIBOSOMAL_S3"/>
    <property type="match status" value="1"/>
</dbReference>
<gene>
    <name evidence="1" type="primary">rpsC</name>
    <name type="ordered locus">Rmet_3311</name>
</gene>
<feature type="chain" id="PRO_0000293862" description="Small ribosomal subunit protein uS3">
    <location>
        <begin position="1"/>
        <end position="265"/>
    </location>
</feature>
<feature type="domain" description="KH type-2" evidence="1">
    <location>
        <begin position="39"/>
        <end position="107"/>
    </location>
</feature>
<feature type="region of interest" description="Disordered" evidence="2">
    <location>
        <begin position="211"/>
        <end position="265"/>
    </location>
</feature>
<feature type="compositionally biased region" description="Basic and acidic residues" evidence="2">
    <location>
        <begin position="221"/>
        <end position="239"/>
    </location>
</feature>
<sequence>MGQKIHPTGFRLAVSRNWASRWYANNTKFAGMLKEDIEVREFLKKKLKNASVGRVVIERPARNARITIYSSRPGVVIGKKGEDIELLKAELQRRMGVPVHVNIEEIRKPETDAQLIADSITQQLERRIMFRRAMKRAMQNAMRLGAQGIKIMSSGRLNGIEIARTEWYREGRVPLHTLRADIDYGFSEAETTYGIIGVKVWVYKGDHLGRNDAPVVEEPQEDRRRRPGRPEGRRREGEGRPAGNRRGGAGAGRRAAPGADAKSGE</sequence>
<accession>Q1LI43</accession>
<reference key="1">
    <citation type="journal article" date="2010" name="PLoS ONE">
        <title>The complete genome sequence of Cupriavidus metallidurans strain CH34, a master survivalist in harsh and anthropogenic environments.</title>
        <authorList>
            <person name="Janssen P.J."/>
            <person name="Van Houdt R."/>
            <person name="Moors H."/>
            <person name="Monsieurs P."/>
            <person name="Morin N."/>
            <person name="Michaux A."/>
            <person name="Benotmane M.A."/>
            <person name="Leys N."/>
            <person name="Vallaeys T."/>
            <person name="Lapidus A."/>
            <person name="Monchy S."/>
            <person name="Medigue C."/>
            <person name="Taghavi S."/>
            <person name="McCorkle S."/>
            <person name="Dunn J."/>
            <person name="van der Lelie D."/>
            <person name="Mergeay M."/>
        </authorList>
    </citation>
    <scope>NUCLEOTIDE SEQUENCE [LARGE SCALE GENOMIC DNA]</scope>
    <source>
        <strain>ATCC 43123 / DSM 2839 / NBRC 102507 / CH34</strain>
    </source>
</reference>
<name>RS3_CUPMC</name>
<protein>
    <recommendedName>
        <fullName evidence="1">Small ribosomal subunit protein uS3</fullName>
    </recommendedName>
    <alternativeName>
        <fullName evidence="3">30S ribosomal protein S3</fullName>
    </alternativeName>
</protein>